<feature type="chain" id="PRO_0000140951" description="Thymidylate synthase">
    <location>
        <begin position="1"/>
        <end position="267"/>
    </location>
</feature>
<feature type="active site" description="Nucleophile" evidence="1">
    <location>
        <position position="150"/>
    </location>
</feature>
<feature type="binding site" description="in other chain" evidence="1">
    <location>
        <position position="25"/>
    </location>
    <ligand>
        <name>dUMP</name>
        <dbReference type="ChEBI" id="CHEBI:246422"/>
        <note>ligand shared between dimeric partners</note>
    </ligand>
</feature>
<feature type="binding site" evidence="1">
    <location>
        <position position="55"/>
    </location>
    <ligand>
        <name>(6R)-5,10-methylene-5,6,7,8-tetrahydrofolate</name>
        <dbReference type="ChEBI" id="CHEBI:15636"/>
    </ligand>
</feature>
<feature type="binding site" evidence="1">
    <location>
        <begin position="130"/>
        <end position="131"/>
    </location>
    <ligand>
        <name>dUMP</name>
        <dbReference type="ChEBI" id="CHEBI:246422"/>
        <note>ligand shared between dimeric partners</note>
    </ligand>
</feature>
<feature type="binding site" description="in other chain" evidence="1">
    <location>
        <begin position="170"/>
        <end position="173"/>
    </location>
    <ligand>
        <name>dUMP</name>
        <dbReference type="ChEBI" id="CHEBI:246422"/>
        <note>ligand shared between dimeric partners</note>
    </ligand>
</feature>
<feature type="binding site" evidence="1">
    <location>
        <position position="173"/>
    </location>
    <ligand>
        <name>(6R)-5,10-methylene-5,6,7,8-tetrahydrofolate</name>
        <dbReference type="ChEBI" id="CHEBI:15636"/>
    </ligand>
</feature>
<feature type="binding site" description="in other chain" evidence="1">
    <location>
        <position position="181"/>
    </location>
    <ligand>
        <name>dUMP</name>
        <dbReference type="ChEBI" id="CHEBI:246422"/>
        <note>ligand shared between dimeric partners</note>
    </ligand>
</feature>
<feature type="binding site" description="in other chain" evidence="1">
    <location>
        <begin position="211"/>
        <end position="213"/>
    </location>
    <ligand>
        <name>dUMP</name>
        <dbReference type="ChEBI" id="CHEBI:246422"/>
        <note>ligand shared between dimeric partners</note>
    </ligand>
</feature>
<feature type="binding site" evidence="1">
    <location>
        <position position="266"/>
    </location>
    <ligand>
        <name>(6R)-5,10-methylene-5,6,7,8-tetrahydrofolate</name>
        <dbReference type="ChEBI" id="CHEBI:15636"/>
    </ligand>
</feature>
<dbReference type="EC" id="2.1.1.45" evidence="1"/>
<dbReference type="EMBL" id="BA000035">
    <property type="protein sequence ID" value="BAC17729.1"/>
    <property type="molecule type" value="Genomic_DNA"/>
</dbReference>
<dbReference type="RefSeq" id="WP_006770118.1">
    <property type="nucleotide sequence ID" value="NC_004369.1"/>
</dbReference>
<dbReference type="SMR" id="Q8FR47"/>
<dbReference type="STRING" id="196164.gene:10741325"/>
<dbReference type="KEGG" id="cef:CE0919"/>
<dbReference type="eggNOG" id="COG0207">
    <property type="taxonomic scope" value="Bacteria"/>
</dbReference>
<dbReference type="HOGENOM" id="CLU_021669_0_0_11"/>
<dbReference type="OrthoDB" id="9774633at2"/>
<dbReference type="UniPathway" id="UPA00575"/>
<dbReference type="Proteomes" id="UP000001409">
    <property type="component" value="Chromosome"/>
</dbReference>
<dbReference type="GO" id="GO:0005829">
    <property type="term" value="C:cytosol"/>
    <property type="evidence" value="ECO:0007669"/>
    <property type="project" value="TreeGrafter"/>
</dbReference>
<dbReference type="GO" id="GO:0004799">
    <property type="term" value="F:thymidylate synthase activity"/>
    <property type="evidence" value="ECO:0007669"/>
    <property type="project" value="UniProtKB-UniRule"/>
</dbReference>
<dbReference type="GO" id="GO:0006231">
    <property type="term" value="P:dTMP biosynthetic process"/>
    <property type="evidence" value="ECO:0007669"/>
    <property type="project" value="UniProtKB-UniRule"/>
</dbReference>
<dbReference type="GO" id="GO:0006235">
    <property type="term" value="P:dTTP biosynthetic process"/>
    <property type="evidence" value="ECO:0007669"/>
    <property type="project" value="UniProtKB-UniRule"/>
</dbReference>
<dbReference type="GO" id="GO:0032259">
    <property type="term" value="P:methylation"/>
    <property type="evidence" value="ECO:0007669"/>
    <property type="project" value="UniProtKB-KW"/>
</dbReference>
<dbReference type="CDD" id="cd00351">
    <property type="entry name" value="TS_Pyrimidine_HMase"/>
    <property type="match status" value="1"/>
</dbReference>
<dbReference type="FunFam" id="3.30.572.10:FF:000013">
    <property type="entry name" value="Thymidylate synthase"/>
    <property type="match status" value="1"/>
</dbReference>
<dbReference type="Gene3D" id="3.30.572.10">
    <property type="entry name" value="Thymidylate synthase/dCMP hydroxymethylase domain"/>
    <property type="match status" value="1"/>
</dbReference>
<dbReference type="HAMAP" id="MF_00008">
    <property type="entry name" value="Thymidy_synth_bact"/>
    <property type="match status" value="1"/>
</dbReference>
<dbReference type="InterPro" id="IPR045097">
    <property type="entry name" value="Thymidate_synth/dCMP_Mease"/>
</dbReference>
<dbReference type="InterPro" id="IPR023451">
    <property type="entry name" value="Thymidate_synth/dCMP_Mease_dom"/>
</dbReference>
<dbReference type="InterPro" id="IPR036926">
    <property type="entry name" value="Thymidate_synth/dCMP_Mease_sf"/>
</dbReference>
<dbReference type="InterPro" id="IPR000398">
    <property type="entry name" value="Thymidylate_synthase"/>
</dbReference>
<dbReference type="InterPro" id="IPR020940">
    <property type="entry name" value="Thymidylate_synthase_AS"/>
</dbReference>
<dbReference type="NCBIfam" id="NF002497">
    <property type="entry name" value="PRK01827.1-3"/>
    <property type="match status" value="1"/>
</dbReference>
<dbReference type="NCBIfam" id="NF002499">
    <property type="entry name" value="PRK01827.1-5"/>
    <property type="match status" value="1"/>
</dbReference>
<dbReference type="NCBIfam" id="TIGR03284">
    <property type="entry name" value="thym_sym"/>
    <property type="match status" value="2"/>
</dbReference>
<dbReference type="PANTHER" id="PTHR11548:SF9">
    <property type="entry name" value="THYMIDYLATE SYNTHASE"/>
    <property type="match status" value="1"/>
</dbReference>
<dbReference type="PANTHER" id="PTHR11548">
    <property type="entry name" value="THYMIDYLATE SYNTHASE 1"/>
    <property type="match status" value="1"/>
</dbReference>
<dbReference type="Pfam" id="PF00303">
    <property type="entry name" value="Thymidylat_synt"/>
    <property type="match status" value="1"/>
</dbReference>
<dbReference type="PRINTS" id="PR00108">
    <property type="entry name" value="THYMDSNTHASE"/>
</dbReference>
<dbReference type="SUPFAM" id="SSF55831">
    <property type="entry name" value="Thymidylate synthase/dCMP hydroxymethylase"/>
    <property type="match status" value="1"/>
</dbReference>
<dbReference type="PROSITE" id="PS00091">
    <property type="entry name" value="THYMIDYLATE_SYNTHASE"/>
    <property type="match status" value="1"/>
</dbReference>
<sequence length="267" mass="30569">MTAIPTPYEDLLRTIRDEGAHKDDRTGTGTTSLFGQQIRYNLQEGFPLLTTKKVHFHSVVGELLWFLRGDSNVRWLQDNNIRIWNEWADEDGELGPVYGVQWRSWPTPDGRHIDQISRALEMLKNNPDSRRNIVSAWNVSELENMALPPCHLLFQLYVADGKLSCQLYQRSADMFLGVPFNIASYALLTHMFAQQADLEVGEFIWTGGDCHIYDNHTEQVDEQLSRAARPYPTLELNKAASLFDYTFEDIAVSNYDPHPLIRGKVAV</sequence>
<protein>
    <recommendedName>
        <fullName evidence="1">Thymidylate synthase</fullName>
        <shortName evidence="1">TS</shortName>
        <shortName evidence="1">TSase</shortName>
        <ecNumber evidence="1">2.1.1.45</ecNumber>
    </recommendedName>
</protein>
<name>TYSY_COREF</name>
<evidence type="ECO:0000255" key="1">
    <source>
        <dbReference type="HAMAP-Rule" id="MF_00008"/>
    </source>
</evidence>
<reference key="1">
    <citation type="journal article" date="2003" name="Genome Res.">
        <title>Comparative complete genome sequence analysis of the amino acid replacements responsible for the thermostability of Corynebacterium efficiens.</title>
        <authorList>
            <person name="Nishio Y."/>
            <person name="Nakamura Y."/>
            <person name="Kawarabayasi Y."/>
            <person name="Usuda Y."/>
            <person name="Kimura E."/>
            <person name="Sugimoto S."/>
            <person name="Matsui K."/>
            <person name="Yamagishi A."/>
            <person name="Kikuchi H."/>
            <person name="Ikeo K."/>
            <person name="Gojobori T."/>
        </authorList>
    </citation>
    <scope>NUCLEOTIDE SEQUENCE [LARGE SCALE GENOMIC DNA]</scope>
    <source>
        <strain>DSM 44549 / YS-314 / AJ 12310 / JCM 11189 / NBRC 100395</strain>
    </source>
</reference>
<proteinExistence type="inferred from homology"/>
<gene>
    <name evidence="1" type="primary">thyA</name>
    <name type="ordered locus">CE0919</name>
</gene>
<organism>
    <name type="scientific">Corynebacterium efficiens (strain DSM 44549 / YS-314 / AJ 12310 / JCM 11189 / NBRC 100395)</name>
    <dbReference type="NCBI Taxonomy" id="196164"/>
    <lineage>
        <taxon>Bacteria</taxon>
        <taxon>Bacillati</taxon>
        <taxon>Actinomycetota</taxon>
        <taxon>Actinomycetes</taxon>
        <taxon>Mycobacteriales</taxon>
        <taxon>Corynebacteriaceae</taxon>
        <taxon>Corynebacterium</taxon>
    </lineage>
</organism>
<accession>Q8FR47</accession>
<keyword id="KW-0963">Cytoplasm</keyword>
<keyword id="KW-0489">Methyltransferase</keyword>
<keyword id="KW-0545">Nucleotide biosynthesis</keyword>
<keyword id="KW-1185">Reference proteome</keyword>
<keyword id="KW-0808">Transferase</keyword>
<comment type="function">
    <text evidence="1">Catalyzes the reductive methylation of 2'-deoxyuridine-5'-monophosphate (dUMP) to 2'-deoxythymidine-5'-monophosphate (dTMP) while utilizing 5,10-methylenetetrahydrofolate (mTHF) as the methyl donor and reductant in the reaction, yielding dihydrofolate (DHF) as a by-product. This enzymatic reaction provides an intracellular de novo source of dTMP, an essential precursor for DNA biosynthesis.</text>
</comment>
<comment type="catalytic activity">
    <reaction evidence="1">
        <text>dUMP + (6R)-5,10-methylene-5,6,7,8-tetrahydrofolate = 7,8-dihydrofolate + dTMP</text>
        <dbReference type="Rhea" id="RHEA:12104"/>
        <dbReference type="ChEBI" id="CHEBI:15636"/>
        <dbReference type="ChEBI" id="CHEBI:57451"/>
        <dbReference type="ChEBI" id="CHEBI:63528"/>
        <dbReference type="ChEBI" id="CHEBI:246422"/>
        <dbReference type="EC" id="2.1.1.45"/>
    </reaction>
</comment>
<comment type="pathway">
    <text evidence="1">Pyrimidine metabolism; dTTP biosynthesis.</text>
</comment>
<comment type="subunit">
    <text evidence="1">Homodimer.</text>
</comment>
<comment type="subcellular location">
    <subcellularLocation>
        <location evidence="1">Cytoplasm</location>
    </subcellularLocation>
</comment>
<comment type="similarity">
    <text evidence="1">Belongs to the thymidylate synthase family. Bacterial-type ThyA subfamily.</text>
</comment>